<geneLocation type="plasmid" evidence="8">
    <name>pWWU2</name>
</geneLocation>
<keyword id="KW-0058">Aromatic hydrocarbons catabolism</keyword>
<keyword id="KW-0223">Dioxygenase</keyword>
<keyword id="KW-0560">Oxidoreductase</keyword>
<keyword id="KW-0614">Plasmid</keyword>
<proteinExistence type="evidence at protein level"/>
<comment type="function">
    <text evidence="2 3">Component of the naphthalene dioxygenase (NDO) multicomponent enzyme system which catalyzes the incorporation of both atoms of molecular oxygen into naphthalene to form cis-(1R,2S)-dihydroxy-1,2-dihydronaphthalene (PubMed:11872705, PubMed:9573207). Also able to use styrene as substrate (PubMed:11872705). The beta subunit seems to have a structural role in the holoenzyme.</text>
</comment>
<comment type="pathway">
    <text evidence="7">Aromatic compound metabolism; naphthalene degradation.</text>
</comment>
<comment type="subunit">
    <text evidence="2 3">The naphthalene dioxygenase (NDO) multicomponent enzyme system is composed of an electron transfer component and a dioxygenase component (iron sulfur protein (ISP)). The electron transfer component is composed of a ferredoxin reductase (NagAa) and a ferredoxin (NagAb), and the dioxygenase component is formed by a large alpha subunit (NagAc) and a small beta subunit (NagAd).</text>
</comment>
<comment type="similarity">
    <text evidence="6">Belongs to the bacterial ring-hydroxylating dioxygenase beta subunit family.</text>
</comment>
<name>NDOC_RALSP</name>
<protein>
    <recommendedName>
        <fullName evidence="4">Naphthalene 1,2-dioxygenase system, small oxygenase component</fullName>
    </recommendedName>
    <alternativeName>
        <fullName evidence="1">ISP NAP</fullName>
    </alternativeName>
    <alternativeName>
        <fullName evidence="1">Naphthalene 1,2-dioxygenase ISP beta</fullName>
    </alternativeName>
    <alternativeName>
        <fullName evidence="4">Naphthalene 1,2-dioxygenase subunit beta</fullName>
        <shortName evidence="1">ND subunit beta</shortName>
        <shortName evidence="4">NDO subunit betaa</shortName>
    </alternativeName>
</protein>
<reference key="1">
    <citation type="journal article" date="1998" name="J. Bacteriol.">
        <title>A gene cluster encoding steps in conversion of naphthalene to gentisate in Pseudomonas sp. strain U2.</title>
        <authorList>
            <person name="Fuenmayor S.L."/>
            <person name="Wild M."/>
            <person name="Boyes A.L."/>
            <person name="Williams P.A."/>
        </authorList>
    </citation>
    <scope>NUCLEOTIDE SEQUENCE [GENOMIC DNA]</scope>
    <scope>FUNCTION</scope>
    <scope>SUBUNIT</scope>
    <source>
        <strain>U2</strain>
    </source>
</reference>
<reference key="2">
    <citation type="journal article" date="2002" name="J. Bacteriol.">
        <title>Salicylate 5-hydroxylase from Ralstonia sp. strain U2: a monooxygenase with close relationships to and shared electron transport proteins with naphthalene dioxygenase.</title>
        <authorList>
            <person name="Zhou N.Y."/>
            <person name="Al-Dulayymi J."/>
            <person name="Baird M.S."/>
            <person name="Williams P.A."/>
        </authorList>
    </citation>
    <scope>FUNCTION</scope>
    <scope>PATHWAY</scope>
    <scope>SUBUNIT</scope>
    <scope>SUBSTRATE SPECIFICITY</scope>
    <source>
        <strain>U2</strain>
    </source>
</reference>
<evidence type="ECO:0000250" key="1">
    <source>
        <dbReference type="UniProtKB" id="P0A112"/>
    </source>
</evidence>
<evidence type="ECO:0000269" key="2">
    <source>
    </source>
</evidence>
<evidence type="ECO:0000269" key="3">
    <source>
    </source>
</evidence>
<evidence type="ECO:0000303" key="4">
    <source>
    </source>
</evidence>
<evidence type="ECO:0000303" key="5">
    <source>
    </source>
</evidence>
<evidence type="ECO:0000305" key="6"/>
<evidence type="ECO:0000305" key="7">
    <source>
    </source>
</evidence>
<evidence type="ECO:0000312" key="8">
    <source>
        <dbReference type="EMBL" id="AAD12611.1"/>
    </source>
</evidence>
<organism>
    <name type="scientific">Ralstonia sp</name>
    <dbReference type="NCBI Taxonomy" id="54061"/>
    <lineage>
        <taxon>Bacteria</taxon>
        <taxon>Pseudomonadati</taxon>
        <taxon>Pseudomonadota</taxon>
        <taxon>Betaproteobacteria</taxon>
        <taxon>Burkholderiales</taxon>
        <taxon>Burkholderiaceae</taxon>
        <taxon>Ralstonia</taxon>
    </lineage>
</organism>
<dbReference type="EMBL" id="AF036940">
    <property type="protein sequence ID" value="AAD12611.1"/>
    <property type="molecule type" value="Genomic_DNA"/>
</dbReference>
<dbReference type="SMR" id="O52383"/>
<dbReference type="UniPathway" id="UPA00082"/>
<dbReference type="GO" id="GO:1902494">
    <property type="term" value="C:catalytic complex"/>
    <property type="evidence" value="ECO:0000314"/>
    <property type="project" value="UniProtKB"/>
</dbReference>
<dbReference type="GO" id="GO:0051213">
    <property type="term" value="F:dioxygenase activity"/>
    <property type="evidence" value="ECO:0007669"/>
    <property type="project" value="UniProtKB-KW"/>
</dbReference>
<dbReference type="GO" id="GO:0019380">
    <property type="term" value="P:3-phenylpropionate catabolic process"/>
    <property type="evidence" value="ECO:0007669"/>
    <property type="project" value="TreeGrafter"/>
</dbReference>
<dbReference type="GO" id="GO:1901170">
    <property type="term" value="P:naphthalene catabolic process"/>
    <property type="evidence" value="ECO:0000316"/>
    <property type="project" value="UniProtKB"/>
</dbReference>
<dbReference type="CDD" id="cd00667">
    <property type="entry name" value="ring_hydroxylating_dioxygenases_beta"/>
    <property type="match status" value="1"/>
</dbReference>
<dbReference type="Gene3D" id="3.10.450.50">
    <property type="match status" value="1"/>
</dbReference>
<dbReference type="InterPro" id="IPR032710">
    <property type="entry name" value="NTF2-like_dom_sf"/>
</dbReference>
<dbReference type="InterPro" id="IPR000391">
    <property type="entry name" value="Rng_hydr_dOase-bsu"/>
</dbReference>
<dbReference type="PANTHER" id="PTHR41534:SF2">
    <property type="entry name" value="3-PHENYLPROPIONATE_CINNAMIC ACID DIOXYGENASE SUBUNIT BETA"/>
    <property type="match status" value="1"/>
</dbReference>
<dbReference type="PANTHER" id="PTHR41534">
    <property type="entry name" value="BLR3401 PROTEIN"/>
    <property type="match status" value="1"/>
</dbReference>
<dbReference type="Pfam" id="PF00866">
    <property type="entry name" value="Ring_hydroxyl_B"/>
    <property type="match status" value="1"/>
</dbReference>
<dbReference type="SUPFAM" id="SSF54427">
    <property type="entry name" value="NTF2-like"/>
    <property type="match status" value="1"/>
</dbReference>
<accession>O52383</accession>
<gene>
    <name evidence="5" type="primary">nagAd</name>
</gene>
<sequence>MMINTQEDKLVSAHDAEEFHRFFVGHDSDLQQEVTTLLTREAHLLDIQAYNAWLEHCVAPEIKYQVISREFRSTSERRYQLNDAVNIYNENYQHLKVRVEHQMDPQNWANSPKIRFTRFVTNVTAAKDKIVPDLLHVRSNLILHRARRGNQVDVFYATREDKWKRIEGGGIQLVERLVDYPERILQTHNLMTFL</sequence>
<feature type="chain" id="PRO_0000421812" description="Naphthalene 1,2-dioxygenase system, small oxygenase component">
    <location>
        <begin position="1"/>
        <end position="194"/>
    </location>
</feature>